<gene>
    <name evidence="1" type="primary">proS</name>
    <name type="ordered locus">Tpen_0817</name>
</gene>
<proteinExistence type="inferred from homology"/>
<keyword id="KW-0030">Aminoacyl-tRNA synthetase</keyword>
<keyword id="KW-0067">ATP-binding</keyword>
<keyword id="KW-0963">Cytoplasm</keyword>
<keyword id="KW-0436">Ligase</keyword>
<keyword id="KW-0547">Nucleotide-binding</keyword>
<keyword id="KW-0648">Protein biosynthesis</keyword>
<keyword id="KW-1185">Reference proteome</keyword>
<sequence length="482" mass="56335">MSEQGITVSKSEDFSEWYSQVLSKAGLVDLRYNVQGFVVHKPWLMRIIKAIYRFFEEELEKTGHEPVLFPLVIPEENFEKEKEHVEGFKPEVFWVTQAGDEKLERRLALRPTSETAFYYMYSYWIQSWRDLPLKLYQSVSVYRNEKNTRPLIRGREFLWIEAHDAFATHEEALNQIREDMENSRKVIWEKLGIPFLFLRRPPWDKFSGAEDTYAADTIMPDGRVLQISSTHDLGQRFAKAFNVTFLDKDGKRKYVWQTCYGPGIWRITAALIAIHGDDKGLVLPMNVAPIQVVIVPIYYKESDKERVLEKCRKLEAMIREAGYRVYLDAREEYTPGWKFNDWELKGVPVRLEVGVREVETGTVTVFRRDLRVKEKVADSELISHIRKLENDILEELKRRAKEFFESRIVTATRREEVEEALRSGKMVKMPFCGREECADDLKEATDGGKVRGTEIDFKEGDYGRCAWCGAPARLIVYVAKSY</sequence>
<name>SYP_THEPD</name>
<organism>
    <name type="scientific">Thermofilum pendens (strain DSM 2475 / Hrk 5)</name>
    <dbReference type="NCBI Taxonomy" id="368408"/>
    <lineage>
        <taxon>Archaea</taxon>
        <taxon>Thermoproteota</taxon>
        <taxon>Thermoprotei</taxon>
        <taxon>Thermofilales</taxon>
        <taxon>Thermofilaceae</taxon>
        <taxon>Thermofilum</taxon>
    </lineage>
</organism>
<evidence type="ECO:0000255" key="1">
    <source>
        <dbReference type="HAMAP-Rule" id="MF_01571"/>
    </source>
</evidence>
<feature type="chain" id="PRO_0000288424" description="Proline--tRNA ligase">
    <location>
        <begin position="1"/>
        <end position="482"/>
    </location>
</feature>
<reference key="1">
    <citation type="journal article" date="2008" name="J. Bacteriol.">
        <title>Genome sequence of Thermofilum pendens reveals an exceptional loss of biosynthetic pathways without genome reduction.</title>
        <authorList>
            <person name="Anderson I."/>
            <person name="Rodriguez J."/>
            <person name="Susanti D."/>
            <person name="Porat I."/>
            <person name="Reich C."/>
            <person name="Ulrich L.E."/>
            <person name="Elkins J.G."/>
            <person name="Mavromatis K."/>
            <person name="Lykidis A."/>
            <person name="Kim E."/>
            <person name="Thompson L.S."/>
            <person name="Nolan M."/>
            <person name="Land M."/>
            <person name="Copeland A."/>
            <person name="Lapidus A."/>
            <person name="Lucas S."/>
            <person name="Detter C."/>
            <person name="Zhulin I.B."/>
            <person name="Olsen G.J."/>
            <person name="Whitman W."/>
            <person name="Mukhopadhyay B."/>
            <person name="Bristow J."/>
            <person name="Kyrpides N."/>
        </authorList>
    </citation>
    <scope>NUCLEOTIDE SEQUENCE [LARGE SCALE GENOMIC DNA]</scope>
    <source>
        <strain>DSM 2475 / Hrk 5</strain>
    </source>
</reference>
<protein>
    <recommendedName>
        <fullName evidence="1">Proline--tRNA ligase</fullName>
        <ecNumber evidence="1">6.1.1.15</ecNumber>
    </recommendedName>
    <alternativeName>
        <fullName evidence="1">Prolyl-tRNA synthetase</fullName>
        <shortName evidence="1">ProRS</shortName>
    </alternativeName>
</protein>
<comment type="function">
    <text evidence="1">Catalyzes the attachment of proline to tRNA(Pro) in a two-step reaction: proline is first activated by ATP to form Pro-AMP and then transferred to the acceptor end of tRNA(Pro).</text>
</comment>
<comment type="catalytic activity">
    <reaction evidence="1">
        <text>tRNA(Pro) + L-proline + ATP = L-prolyl-tRNA(Pro) + AMP + diphosphate</text>
        <dbReference type="Rhea" id="RHEA:14305"/>
        <dbReference type="Rhea" id="RHEA-COMP:9700"/>
        <dbReference type="Rhea" id="RHEA-COMP:9702"/>
        <dbReference type="ChEBI" id="CHEBI:30616"/>
        <dbReference type="ChEBI" id="CHEBI:33019"/>
        <dbReference type="ChEBI" id="CHEBI:60039"/>
        <dbReference type="ChEBI" id="CHEBI:78442"/>
        <dbReference type="ChEBI" id="CHEBI:78532"/>
        <dbReference type="ChEBI" id="CHEBI:456215"/>
        <dbReference type="EC" id="6.1.1.15"/>
    </reaction>
</comment>
<comment type="subunit">
    <text evidence="1">Homodimer.</text>
</comment>
<comment type="subcellular location">
    <subcellularLocation>
        <location evidence="1">Cytoplasm</location>
    </subcellularLocation>
</comment>
<comment type="domain">
    <text evidence="1">Consists of three domains: the N-terminal catalytic domain, the anticodon-binding domain and the C-terminal extension.</text>
</comment>
<comment type="similarity">
    <text evidence="1">Belongs to the class-II aminoacyl-tRNA synthetase family. ProS type 3 subfamily.</text>
</comment>
<dbReference type="EC" id="6.1.1.15" evidence="1"/>
<dbReference type="EMBL" id="CP000505">
    <property type="protein sequence ID" value="ABL78218.1"/>
    <property type="molecule type" value="Genomic_DNA"/>
</dbReference>
<dbReference type="RefSeq" id="WP_011752483.1">
    <property type="nucleotide sequence ID" value="NC_008698.1"/>
</dbReference>
<dbReference type="SMR" id="A1RYD8"/>
<dbReference type="STRING" id="368408.Tpen_0817"/>
<dbReference type="EnsemblBacteria" id="ABL78218">
    <property type="protein sequence ID" value="ABL78218"/>
    <property type="gene ID" value="Tpen_0817"/>
</dbReference>
<dbReference type="GeneID" id="4601988"/>
<dbReference type="KEGG" id="tpe:Tpen_0817"/>
<dbReference type="eggNOG" id="arCOG00402">
    <property type="taxonomic scope" value="Archaea"/>
</dbReference>
<dbReference type="HOGENOM" id="CLU_001882_4_2_2"/>
<dbReference type="OrthoDB" id="7375at2157"/>
<dbReference type="Proteomes" id="UP000000641">
    <property type="component" value="Chromosome"/>
</dbReference>
<dbReference type="GO" id="GO:0017101">
    <property type="term" value="C:aminoacyl-tRNA synthetase multienzyme complex"/>
    <property type="evidence" value="ECO:0007669"/>
    <property type="project" value="TreeGrafter"/>
</dbReference>
<dbReference type="GO" id="GO:0005737">
    <property type="term" value="C:cytoplasm"/>
    <property type="evidence" value="ECO:0007669"/>
    <property type="project" value="UniProtKB-SubCell"/>
</dbReference>
<dbReference type="GO" id="GO:0005524">
    <property type="term" value="F:ATP binding"/>
    <property type="evidence" value="ECO:0007669"/>
    <property type="project" value="UniProtKB-UniRule"/>
</dbReference>
<dbReference type="GO" id="GO:0004827">
    <property type="term" value="F:proline-tRNA ligase activity"/>
    <property type="evidence" value="ECO:0007669"/>
    <property type="project" value="UniProtKB-UniRule"/>
</dbReference>
<dbReference type="GO" id="GO:0006433">
    <property type="term" value="P:prolyl-tRNA aminoacylation"/>
    <property type="evidence" value="ECO:0007669"/>
    <property type="project" value="UniProtKB-UniRule"/>
</dbReference>
<dbReference type="CDD" id="cd00862">
    <property type="entry name" value="ProRS_anticodon_zinc"/>
    <property type="match status" value="1"/>
</dbReference>
<dbReference type="FunFam" id="3.40.50.800:FF:000005">
    <property type="entry name" value="bifunctional glutamate/proline--tRNA ligase"/>
    <property type="match status" value="1"/>
</dbReference>
<dbReference type="FunFam" id="3.30.930.10:FF:000037">
    <property type="entry name" value="Proline--tRNA ligase"/>
    <property type="match status" value="1"/>
</dbReference>
<dbReference type="Gene3D" id="3.40.50.800">
    <property type="entry name" value="Anticodon-binding domain"/>
    <property type="match status" value="1"/>
</dbReference>
<dbReference type="Gene3D" id="3.30.930.10">
    <property type="entry name" value="Bira Bifunctional Protein, Domain 2"/>
    <property type="match status" value="1"/>
</dbReference>
<dbReference type="Gene3D" id="3.30.110.30">
    <property type="entry name" value="C-terminal domain of ProRS"/>
    <property type="match status" value="1"/>
</dbReference>
<dbReference type="HAMAP" id="MF_01571">
    <property type="entry name" value="Pro_tRNA_synth_type3"/>
    <property type="match status" value="1"/>
</dbReference>
<dbReference type="InterPro" id="IPR002314">
    <property type="entry name" value="aa-tRNA-synt_IIb"/>
</dbReference>
<dbReference type="InterPro" id="IPR006195">
    <property type="entry name" value="aa-tRNA-synth_II"/>
</dbReference>
<dbReference type="InterPro" id="IPR045864">
    <property type="entry name" value="aa-tRNA-synth_II/BPL/LPL"/>
</dbReference>
<dbReference type="InterPro" id="IPR004154">
    <property type="entry name" value="Anticodon-bd"/>
</dbReference>
<dbReference type="InterPro" id="IPR036621">
    <property type="entry name" value="Anticodon-bd_dom_sf"/>
</dbReference>
<dbReference type="InterPro" id="IPR002316">
    <property type="entry name" value="Pro-tRNA-ligase_IIa"/>
</dbReference>
<dbReference type="InterPro" id="IPR004499">
    <property type="entry name" value="Pro-tRNA-ligase_IIa_arc-type"/>
</dbReference>
<dbReference type="InterPro" id="IPR016061">
    <property type="entry name" value="Pro-tRNA_ligase_II_C"/>
</dbReference>
<dbReference type="InterPro" id="IPR017449">
    <property type="entry name" value="Pro-tRNA_synth_II"/>
</dbReference>
<dbReference type="NCBIfam" id="TIGR00408">
    <property type="entry name" value="proS_fam_I"/>
    <property type="match status" value="1"/>
</dbReference>
<dbReference type="PANTHER" id="PTHR43382:SF2">
    <property type="entry name" value="BIFUNCTIONAL GLUTAMATE_PROLINE--TRNA LIGASE"/>
    <property type="match status" value="1"/>
</dbReference>
<dbReference type="PANTHER" id="PTHR43382">
    <property type="entry name" value="PROLYL-TRNA SYNTHETASE"/>
    <property type="match status" value="1"/>
</dbReference>
<dbReference type="Pfam" id="PF03129">
    <property type="entry name" value="HGTP_anticodon"/>
    <property type="match status" value="1"/>
</dbReference>
<dbReference type="Pfam" id="PF09180">
    <property type="entry name" value="ProRS-C_1"/>
    <property type="match status" value="1"/>
</dbReference>
<dbReference type="Pfam" id="PF00587">
    <property type="entry name" value="tRNA-synt_2b"/>
    <property type="match status" value="1"/>
</dbReference>
<dbReference type="PRINTS" id="PR01046">
    <property type="entry name" value="TRNASYNTHPRO"/>
</dbReference>
<dbReference type="SMART" id="SM00946">
    <property type="entry name" value="ProRS-C_1"/>
    <property type="match status" value="1"/>
</dbReference>
<dbReference type="SUPFAM" id="SSF64586">
    <property type="entry name" value="C-terminal domain of ProRS"/>
    <property type="match status" value="1"/>
</dbReference>
<dbReference type="SUPFAM" id="SSF52954">
    <property type="entry name" value="Class II aaRS ABD-related"/>
    <property type="match status" value="1"/>
</dbReference>
<dbReference type="SUPFAM" id="SSF55681">
    <property type="entry name" value="Class II aaRS and biotin synthetases"/>
    <property type="match status" value="1"/>
</dbReference>
<dbReference type="PROSITE" id="PS50862">
    <property type="entry name" value="AA_TRNA_LIGASE_II"/>
    <property type="match status" value="1"/>
</dbReference>
<accession>A1RYD8</accession>